<name>ENGB_SALPB</name>
<evidence type="ECO:0000255" key="1">
    <source>
        <dbReference type="HAMAP-Rule" id="MF_00321"/>
    </source>
</evidence>
<accession>A9MYC7</accession>
<comment type="function">
    <text evidence="1">Necessary for normal cell division and for the maintenance of normal septation.</text>
</comment>
<comment type="cofactor">
    <cofactor evidence="1">
        <name>Mg(2+)</name>
        <dbReference type="ChEBI" id="CHEBI:18420"/>
    </cofactor>
</comment>
<comment type="similarity">
    <text evidence="1">Belongs to the TRAFAC class TrmE-Era-EngA-EngB-Septin-like GTPase superfamily. EngB GTPase family.</text>
</comment>
<gene>
    <name evidence="1" type="primary">engB</name>
    <name type="ordered locus">SPAB_04962</name>
</gene>
<proteinExistence type="inferred from homology"/>
<sequence length="210" mass="23607">MTNLNYQQTHFVMSAPDIRHLPSDRGIEVAFAGRSNAGKSSALNTLTNQKSLARTSKTPGRTQLINLFEVVDGKRLVDLPGYGYAEVPEEMKRKWQRALGEYLEKRQSLQGLVVLMDIRHPLKDLDQQMIQWAVESNIQVLVLLTKADKLASGARKAQLNMVREAVLAFNGDVQVEAFSSLKKQGVDKLRQKLDSWFSELAPVEEIQDGE</sequence>
<dbReference type="EMBL" id="CP000886">
    <property type="protein sequence ID" value="ABX70255.1"/>
    <property type="molecule type" value="Genomic_DNA"/>
</dbReference>
<dbReference type="SMR" id="A9MYC7"/>
<dbReference type="KEGG" id="spq:SPAB_04962"/>
<dbReference type="PATRIC" id="fig|1016998.12.peg.4654"/>
<dbReference type="HOGENOM" id="CLU_033732_1_0_6"/>
<dbReference type="BioCyc" id="SENT1016998:SPAB_RS20180-MONOMER"/>
<dbReference type="Proteomes" id="UP000008556">
    <property type="component" value="Chromosome"/>
</dbReference>
<dbReference type="GO" id="GO:0005829">
    <property type="term" value="C:cytosol"/>
    <property type="evidence" value="ECO:0007669"/>
    <property type="project" value="TreeGrafter"/>
</dbReference>
<dbReference type="GO" id="GO:0005525">
    <property type="term" value="F:GTP binding"/>
    <property type="evidence" value="ECO:0007669"/>
    <property type="project" value="UniProtKB-UniRule"/>
</dbReference>
<dbReference type="GO" id="GO:0046872">
    <property type="term" value="F:metal ion binding"/>
    <property type="evidence" value="ECO:0007669"/>
    <property type="project" value="UniProtKB-KW"/>
</dbReference>
<dbReference type="GO" id="GO:0000917">
    <property type="term" value="P:division septum assembly"/>
    <property type="evidence" value="ECO:0007669"/>
    <property type="project" value="UniProtKB-KW"/>
</dbReference>
<dbReference type="CDD" id="cd01876">
    <property type="entry name" value="YihA_EngB"/>
    <property type="match status" value="1"/>
</dbReference>
<dbReference type="FunFam" id="3.40.50.300:FF:000098">
    <property type="entry name" value="Probable GTP-binding protein EngB"/>
    <property type="match status" value="1"/>
</dbReference>
<dbReference type="Gene3D" id="3.40.50.300">
    <property type="entry name" value="P-loop containing nucleotide triphosphate hydrolases"/>
    <property type="match status" value="1"/>
</dbReference>
<dbReference type="HAMAP" id="MF_00321">
    <property type="entry name" value="GTPase_EngB"/>
    <property type="match status" value="1"/>
</dbReference>
<dbReference type="InterPro" id="IPR030393">
    <property type="entry name" value="G_ENGB_dom"/>
</dbReference>
<dbReference type="InterPro" id="IPR006073">
    <property type="entry name" value="GTP-bd"/>
</dbReference>
<dbReference type="InterPro" id="IPR019987">
    <property type="entry name" value="GTP-bd_ribosome_bio_YsxC"/>
</dbReference>
<dbReference type="InterPro" id="IPR027417">
    <property type="entry name" value="P-loop_NTPase"/>
</dbReference>
<dbReference type="NCBIfam" id="TIGR03598">
    <property type="entry name" value="GTPase_YsxC"/>
    <property type="match status" value="1"/>
</dbReference>
<dbReference type="PANTHER" id="PTHR11649:SF13">
    <property type="entry name" value="ENGB-TYPE G DOMAIN-CONTAINING PROTEIN"/>
    <property type="match status" value="1"/>
</dbReference>
<dbReference type="PANTHER" id="PTHR11649">
    <property type="entry name" value="MSS1/TRME-RELATED GTP-BINDING PROTEIN"/>
    <property type="match status" value="1"/>
</dbReference>
<dbReference type="Pfam" id="PF01926">
    <property type="entry name" value="MMR_HSR1"/>
    <property type="match status" value="1"/>
</dbReference>
<dbReference type="SUPFAM" id="SSF52540">
    <property type="entry name" value="P-loop containing nucleoside triphosphate hydrolases"/>
    <property type="match status" value="1"/>
</dbReference>
<dbReference type="PROSITE" id="PS51706">
    <property type="entry name" value="G_ENGB"/>
    <property type="match status" value="1"/>
</dbReference>
<reference key="1">
    <citation type="submission" date="2007-11" db="EMBL/GenBank/DDBJ databases">
        <authorList>
            <consortium name="The Salmonella enterica serovar Paratyphi B Genome Sequencing Project"/>
            <person name="McClelland M."/>
            <person name="Sanderson E.K."/>
            <person name="Porwollik S."/>
            <person name="Spieth J."/>
            <person name="Clifton W.S."/>
            <person name="Fulton R."/>
            <person name="Cordes M."/>
            <person name="Wollam A."/>
            <person name="Shah N."/>
            <person name="Pepin K."/>
            <person name="Bhonagiri V."/>
            <person name="Nash W."/>
            <person name="Johnson M."/>
            <person name="Thiruvilangam P."/>
            <person name="Wilson R."/>
        </authorList>
    </citation>
    <scope>NUCLEOTIDE SEQUENCE [LARGE SCALE GENOMIC DNA]</scope>
    <source>
        <strain>ATCC BAA-1250 / SPB7</strain>
    </source>
</reference>
<keyword id="KW-0131">Cell cycle</keyword>
<keyword id="KW-0132">Cell division</keyword>
<keyword id="KW-0342">GTP-binding</keyword>
<keyword id="KW-0460">Magnesium</keyword>
<keyword id="KW-0479">Metal-binding</keyword>
<keyword id="KW-0547">Nucleotide-binding</keyword>
<keyword id="KW-0717">Septation</keyword>
<organism>
    <name type="scientific">Salmonella paratyphi B (strain ATCC BAA-1250 / SPB7)</name>
    <dbReference type="NCBI Taxonomy" id="1016998"/>
    <lineage>
        <taxon>Bacteria</taxon>
        <taxon>Pseudomonadati</taxon>
        <taxon>Pseudomonadota</taxon>
        <taxon>Gammaproteobacteria</taxon>
        <taxon>Enterobacterales</taxon>
        <taxon>Enterobacteriaceae</taxon>
        <taxon>Salmonella</taxon>
    </lineage>
</organism>
<feature type="chain" id="PRO_1000079180" description="Probable GTP-binding protein EngB">
    <location>
        <begin position="1"/>
        <end position="210"/>
    </location>
</feature>
<feature type="domain" description="EngB-type G" evidence="1">
    <location>
        <begin position="25"/>
        <end position="199"/>
    </location>
</feature>
<feature type="binding site" evidence="1">
    <location>
        <begin position="33"/>
        <end position="40"/>
    </location>
    <ligand>
        <name>GTP</name>
        <dbReference type="ChEBI" id="CHEBI:37565"/>
    </ligand>
</feature>
<feature type="binding site" evidence="1">
    <location>
        <position position="40"/>
    </location>
    <ligand>
        <name>Mg(2+)</name>
        <dbReference type="ChEBI" id="CHEBI:18420"/>
    </ligand>
</feature>
<feature type="binding site" evidence="1">
    <location>
        <begin position="60"/>
        <end position="64"/>
    </location>
    <ligand>
        <name>GTP</name>
        <dbReference type="ChEBI" id="CHEBI:37565"/>
    </ligand>
</feature>
<feature type="binding site" evidence="1">
    <location>
        <position position="62"/>
    </location>
    <ligand>
        <name>Mg(2+)</name>
        <dbReference type="ChEBI" id="CHEBI:18420"/>
    </ligand>
</feature>
<feature type="binding site" evidence="1">
    <location>
        <begin position="78"/>
        <end position="81"/>
    </location>
    <ligand>
        <name>GTP</name>
        <dbReference type="ChEBI" id="CHEBI:37565"/>
    </ligand>
</feature>
<feature type="binding site" evidence="1">
    <location>
        <begin position="145"/>
        <end position="148"/>
    </location>
    <ligand>
        <name>GTP</name>
        <dbReference type="ChEBI" id="CHEBI:37565"/>
    </ligand>
</feature>
<feature type="binding site" evidence="1">
    <location>
        <begin position="178"/>
        <end position="180"/>
    </location>
    <ligand>
        <name>GTP</name>
        <dbReference type="ChEBI" id="CHEBI:37565"/>
    </ligand>
</feature>
<protein>
    <recommendedName>
        <fullName evidence="1">Probable GTP-binding protein EngB</fullName>
    </recommendedName>
</protein>